<feature type="chain" id="PRO_0000117582" description="NADH-ubiquinone oxidoreductase chain 2">
    <location>
        <begin position="1" status="less than"/>
        <end position="274"/>
    </location>
</feature>
<feature type="transmembrane region" description="Helical" evidence="2">
    <location>
        <begin position="28"/>
        <end position="48"/>
    </location>
</feature>
<feature type="transmembrane region" description="Helical" evidence="2">
    <location>
        <begin position="54"/>
        <end position="74"/>
    </location>
</feature>
<feature type="transmembrane region" description="Helical" evidence="2">
    <location>
        <begin position="79"/>
        <end position="99"/>
    </location>
</feature>
<feature type="transmembrane region" description="Helical" evidence="2">
    <location>
        <begin position="107"/>
        <end position="127"/>
    </location>
</feature>
<feature type="transmembrane region" description="Helical" evidence="2">
    <location>
        <begin position="128"/>
        <end position="148"/>
    </location>
</feature>
<feature type="transmembrane region" description="Helical" evidence="2">
    <location>
        <begin position="171"/>
        <end position="191"/>
    </location>
</feature>
<feature type="transmembrane region" description="Helical" evidence="2">
    <location>
        <begin position="206"/>
        <end position="226"/>
    </location>
</feature>
<feature type="transmembrane region" description="Helical" evidence="2">
    <location>
        <begin position="254"/>
        <end position="274"/>
    </location>
</feature>
<feature type="non-terminal residue">
    <location>
        <position position="1"/>
    </location>
</feature>
<gene>
    <name type="primary">mt:ND2</name>
    <name type="synonym">ND2</name>
</gene>
<organism>
    <name type="scientific">Drosophila sechellia</name>
    <name type="common">Fruit fly</name>
    <dbReference type="NCBI Taxonomy" id="7238"/>
    <lineage>
        <taxon>Eukaryota</taxon>
        <taxon>Metazoa</taxon>
        <taxon>Ecdysozoa</taxon>
        <taxon>Arthropoda</taxon>
        <taxon>Hexapoda</taxon>
        <taxon>Insecta</taxon>
        <taxon>Pterygota</taxon>
        <taxon>Neoptera</taxon>
        <taxon>Endopterygota</taxon>
        <taxon>Diptera</taxon>
        <taxon>Brachycera</taxon>
        <taxon>Muscomorpha</taxon>
        <taxon>Ephydroidea</taxon>
        <taxon>Drosophilidae</taxon>
        <taxon>Drosophila</taxon>
        <taxon>Sophophora</taxon>
    </lineage>
</organism>
<reference key="1">
    <citation type="journal article" date="1990" name="Proc. Natl. Acad. Sci. U.S.A.">
        <title>Evolution of Drosophila mitochondrial DNA and the history of the melanogaster subgroup.</title>
        <authorList>
            <person name="Satta Y."/>
            <person name="Takahata N."/>
        </authorList>
    </citation>
    <scope>NUCLEOTIDE SEQUENCE [GENOMIC DNA]</scope>
</reference>
<keyword id="KW-0249">Electron transport</keyword>
<keyword id="KW-0472">Membrane</keyword>
<keyword id="KW-0496">Mitochondrion</keyword>
<keyword id="KW-0999">Mitochondrion inner membrane</keyword>
<keyword id="KW-0520">NAD</keyword>
<keyword id="KW-0679">Respiratory chain</keyword>
<keyword id="KW-1278">Translocase</keyword>
<keyword id="KW-0812">Transmembrane</keyword>
<keyword id="KW-1133">Transmembrane helix</keyword>
<keyword id="KW-0813">Transport</keyword>
<keyword id="KW-0830">Ubiquinone</keyword>
<name>NU2M_DROSE</name>
<sequence>STVLLFSSILLMLKNNLNNEINESFTSMIIMSALLLKSGAAPFHFWFPNMMEGLTWMNALMLMTWQKIAPLMLISYLNIKYLLLISVILSVIIGAIGGLNQTSLRKLMAFSSINHLGWMLSSLMFSESIWLIYFFFYSFLSFVLTFMFNIFKLFHLNQLFSWFVNSKILKFTLFMNFLSLGGLPPFLGFLPKWLVIQQLTLCNQYFLLTLMMMSTLITLFFYLRICYSAFMMNYFENNWIMKMNMISNNTNMYLIMTFFSIFGLFMISLFYFMF</sequence>
<dbReference type="EC" id="7.1.1.2"/>
<dbReference type="EMBL" id="M57908">
    <property type="protein sequence ID" value="AAB02285.1"/>
    <property type="molecule type" value="Genomic_DNA"/>
</dbReference>
<dbReference type="SMR" id="P29868"/>
<dbReference type="GO" id="GO:0005743">
    <property type="term" value="C:mitochondrial inner membrane"/>
    <property type="evidence" value="ECO:0007669"/>
    <property type="project" value="UniProtKB-SubCell"/>
</dbReference>
<dbReference type="GO" id="GO:0008137">
    <property type="term" value="F:NADH dehydrogenase (ubiquinone) activity"/>
    <property type="evidence" value="ECO:0007669"/>
    <property type="project" value="UniProtKB-EC"/>
</dbReference>
<dbReference type="GO" id="GO:0006120">
    <property type="term" value="P:mitochondrial electron transport, NADH to ubiquinone"/>
    <property type="evidence" value="ECO:0007669"/>
    <property type="project" value="InterPro"/>
</dbReference>
<dbReference type="InterPro" id="IPR050175">
    <property type="entry name" value="Complex_I_Subunit_2"/>
</dbReference>
<dbReference type="InterPro" id="IPR010933">
    <property type="entry name" value="NADH_DH_su2_C"/>
</dbReference>
<dbReference type="InterPro" id="IPR003917">
    <property type="entry name" value="NADH_UbQ_OxRdtase_chain2"/>
</dbReference>
<dbReference type="InterPro" id="IPR001750">
    <property type="entry name" value="ND/Mrp_TM"/>
</dbReference>
<dbReference type="PANTHER" id="PTHR46552">
    <property type="entry name" value="NADH-UBIQUINONE OXIDOREDUCTASE CHAIN 2"/>
    <property type="match status" value="1"/>
</dbReference>
<dbReference type="PANTHER" id="PTHR46552:SF1">
    <property type="entry name" value="NADH-UBIQUINONE OXIDOREDUCTASE CHAIN 2"/>
    <property type="match status" value="1"/>
</dbReference>
<dbReference type="Pfam" id="PF06444">
    <property type="entry name" value="NADH_dehy_S2_C"/>
    <property type="match status" value="1"/>
</dbReference>
<dbReference type="Pfam" id="PF00361">
    <property type="entry name" value="Proton_antipo_M"/>
    <property type="match status" value="1"/>
</dbReference>
<dbReference type="PRINTS" id="PR01436">
    <property type="entry name" value="NADHDHGNASE2"/>
</dbReference>
<geneLocation type="mitochondrion"/>
<accession>P29868</accession>
<proteinExistence type="inferred from homology"/>
<protein>
    <recommendedName>
        <fullName>NADH-ubiquinone oxidoreductase chain 2</fullName>
        <ecNumber>7.1.1.2</ecNumber>
    </recommendedName>
    <alternativeName>
        <fullName>NADH dehydrogenase subunit 2</fullName>
    </alternativeName>
</protein>
<evidence type="ECO:0000250" key="1"/>
<evidence type="ECO:0000255" key="2"/>
<evidence type="ECO:0000305" key="3"/>
<comment type="function">
    <text evidence="1">Core subunit of the mitochondrial membrane respiratory chain NADH dehydrogenase (Complex I) that is believed to belong to the minimal assembly required for catalysis. Complex I functions in the transfer of electrons from NADH to the respiratory chain. The immediate electron acceptor for the enzyme is believed to be ubiquinone (By similarity).</text>
</comment>
<comment type="catalytic activity">
    <reaction>
        <text>a ubiquinone + NADH + 5 H(+)(in) = a ubiquinol + NAD(+) + 4 H(+)(out)</text>
        <dbReference type="Rhea" id="RHEA:29091"/>
        <dbReference type="Rhea" id="RHEA-COMP:9565"/>
        <dbReference type="Rhea" id="RHEA-COMP:9566"/>
        <dbReference type="ChEBI" id="CHEBI:15378"/>
        <dbReference type="ChEBI" id="CHEBI:16389"/>
        <dbReference type="ChEBI" id="CHEBI:17976"/>
        <dbReference type="ChEBI" id="CHEBI:57540"/>
        <dbReference type="ChEBI" id="CHEBI:57945"/>
        <dbReference type="EC" id="7.1.1.2"/>
    </reaction>
</comment>
<comment type="subcellular location">
    <subcellularLocation>
        <location>Mitochondrion inner membrane</location>
        <topology>Multi-pass membrane protein</topology>
    </subcellularLocation>
</comment>
<comment type="similarity">
    <text evidence="3">Belongs to the complex I subunit 2 family.</text>
</comment>